<gene>
    <name evidence="1" type="primary">bioC</name>
    <name type="ordered locus">Mmc1_0033</name>
</gene>
<protein>
    <recommendedName>
        <fullName evidence="1">Malonyl-[acyl-carrier protein] O-methyltransferase</fullName>
        <shortName evidence="1">Malonyl-ACP O-methyltransferase</shortName>
        <ecNumber evidence="1">2.1.1.197</ecNumber>
    </recommendedName>
    <alternativeName>
        <fullName evidence="1">Biotin synthesis protein BioC</fullName>
    </alternativeName>
</protein>
<sequence length="270" mass="30083">MNLPNRGEGNRNGRVGKNFGRALNYHRKALVQQHVADELAERLVDFPLPERPRVLEIGCGTGFLSRHLMRQWPGGSFLFTDISAPMLVRCQSHLSDLPGQRQFMVMDGEHCAVRGPFDLVVSSMAMQWFGDLPGALQGLSSLLKTNGMLAFATLGDETFREWRGVCAQYGSPFGRPDYPDVAQLQEMWPSGGEGDVEEDHIPVAHSSGHGFLRALREVGAHQPSGQHRPVSAALMRRMLQATRGGQHGFTVTYHVLYGFYTRSFDDRPIH</sequence>
<reference key="1">
    <citation type="journal article" date="2009" name="Appl. Environ. Microbiol.">
        <title>Complete genome sequence of the chemolithoautotrophic marine magnetotactic coccus strain MC-1.</title>
        <authorList>
            <person name="Schubbe S."/>
            <person name="Williams T.J."/>
            <person name="Xie G."/>
            <person name="Kiss H.E."/>
            <person name="Brettin T.S."/>
            <person name="Martinez D."/>
            <person name="Ross C.A."/>
            <person name="Schuler D."/>
            <person name="Cox B.L."/>
            <person name="Nealson K.H."/>
            <person name="Bazylinski D.A."/>
        </authorList>
    </citation>
    <scope>NUCLEOTIDE SEQUENCE [LARGE SCALE GENOMIC DNA]</scope>
    <source>
        <strain>ATCC BAA-1437 / JCM 17883 / MC-1</strain>
    </source>
</reference>
<keyword id="KW-0093">Biotin biosynthesis</keyword>
<keyword id="KW-0489">Methyltransferase</keyword>
<keyword id="KW-1185">Reference proteome</keyword>
<keyword id="KW-0949">S-adenosyl-L-methionine</keyword>
<keyword id="KW-0808">Transferase</keyword>
<proteinExistence type="inferred from homology"/>
<organism>
    <name type="scientific">Magnetococcus marinus (strain ATCC BAA-1437 / JCM 17883 / MC-1)</name>
    <dbReference type="NCBI Taxonomy" id="156889"/>
    <lineage>
        <taxon>Bacteria</taxon>
        <taxon>Pseudomonadati</taxon>
        <taxon>Pseudomonadota</taxon>
        <taxon>Alphaproteobacteria</taxon>
        <taxon>Magnetococcales</taxon>
        <taxon>Magnetococcaceae</taxon>
        <taxon>Magnetococcus</taxon>
    </lineage>
</organism>
<name>BIOC_MAGMM</name>
<comment type="function">
    <text evidence="1">Converts the free carboxyl group of a malonyl-thioester to its methyl ester by transfer of a methyl group from S-adenosyl-L-methionine (SAM). It allows to synthesize pimeloyl-ACP via the fatty acid synthetic pathway.</text>
</comment>
<comment type="catalytic activity">
    <reaction evidence="1">
        <text>malonyl-[ACP] + S-adenosyl-L-methionine = malonyl-[ACP] methyl ester + S-adenosyl-L-homocysteine</text>
        <dbReference type="Rhea" id="RHEA:17105"/>
        <dbReference type="Rhea" id="RHEA-COMP:9623"/>
        <dbReference type="Rhea" id="RHEA-COMP:9954"/>
        <dbReference type="ChEBI" id="CHEBI:57856"/>
        <dbReference type="ChEBI" id="CHEBI:59789"/>
        <dbReference type="ChEBI" id="CHEBI:78449"/>
        <dbReference type="ChEBI" id="CHEBI:78845"/>
        <dbReference type="EC" id="2.1.1.197"/>
    </reaction>
</comment>
<comment type="pathway">
    <text evidence="1">Cofactor biosynthesis; biotin biosynthesis.</text>
</comment>
<comment type="similarity">
    <text evidence="1">Belongs to the methyltransferase superfamily.</text>
</comment>
<accession>A0L3L9</accession>
<dbReference type="EC" id="2.1.1.197" evidence="1"/>
<dbReference type="EMBL" id="CP000471">
    <property type="protein sequence ID" value="ABK42562.1"/>
    <property type="molecule type" value="Genomic_DNA"/>
</dbReference>
<dbReference type="RefSeq" id="WP_011711736.1">
    <property type="nucleotide sequence ID" value="NC_008576.1"/>
</dbReference>
<dbReference type="SMR" id="A0L3L9"/>
<dbReference type="STRING" id="156889.Mmc1_0033"/>
<dbReference type="KEGG" id="mgm:Mmc1_0033"/>
<dbReference type="eggNOG" id="COG4106">
    <property type="taxonomic scope" value="Bacteria"/>
</dbReference>
<dbReference type="HOGENOM" id="CLU_046586_1_0_5"/>
<dbReference type="OrthoDB" id="9802097at2"/>
<dbReference type="UniPathway" id="UPA00078"/>
<dbReference type="Proteomes" id="UP000002586">
    <property type="component" value="Chromosome"/>
</dbReference>
<dbReference type="GO" id="GO:0010340">
    <property type="term" value="F:carboxyl-O-methyltransferase activity"/>
    <property type="evidence" value="ECO:0007669"/>
    <property type="project" value="UniProtKB-UniRule"/>
</dbReference>
<dbReference type="GO" id="GO:0102130">
    <property type="term" value="F:malonyl-CoA methyltransferase activity"/>
    <property type="evidence" value="ECO:0007669"/>
    <property type="project" value="UniProtKB-EC"/>
</dbReference>
<dbReference type="GO" id="GO:0009102">
    <property type="term" value="P:biotin biosynthetic process"/>
    <property type="evidence" value="ECO:0007669"/>
    <property type="project" value="UniProtKB-UniRule"/>
</dbReference>
<dbReference type="GO" id="GO:0032259">
    <property type="term" value="P:methylation"/>
    <property type="evidence" value="ECO:0007669"/>
    <property type="project" value="UniProtKB-KW"/>
</dbReference>
<dbReference type="CDD" id="cd02440">
    <property type="entry name" value="AdoMet_MTases"/>
    <property type="match status" value="1"/>
</dbReference>
<dbReference type="Gene3D" id="3.40.50.150">
    <property type="entry name" value="Vaccinia Virus protein VP39"/>
    <property type="match status" value="1"/>
</dbReference>
<dbReference type="HAMAP" id="MF_00835">
    <property type="entry name" value="BioC"/>
    <property type="match status" value="1"/>
</dbReference>
<dbReference type="InterPro" id="IPR011814">
    <property type="entry name" value="BioC"/>
</dbReference>
<dbReference type="InterPro" id="IPR050602">
    <property type="entry name" value="Malonyl-ACP_OMT"/>
</dbReference>
<dbReference type="InterPro" id="IPR013217">
    <property type="entry name" value="Methyltransf_12"/>
</dbReference>
<dbReference type="InterPro" id="IPR029063">
    <property type="entry name" value="SAM-dependent_MTases_sf"/>
</dbReference>
<dbReference type="NCBIfam" id="TIGR02072">
    <property type="entry name" value="BioC"/>
    <property type="match status" value="1"/>
</dbReference>
<dbReference type="PANTHER" id="PTHR13090">
    <property type="entry name" value="ARGININE-HYDROXYLASE NDUFAF5, MITOCHONDRIAL"/>
    <property type="match status" value="1"/>
</dbReference>
<dbReference type="PANTHER" id="PTHR13090:SF1">
    <property type="entry name" value="ARGININE-HYDROXYLASE NDUFAF5, MITOCHONDRIAL"/>
    <property type="match status" value="1"/>
</dbReference>
<dbReference type="Pfam" id="PF08242">
    <property type="entry name" value="Methyltransf_12"/>
    <property type="match status" value="1"/>
</dbReference>
<dbReference type="SUPFAM" id="SSF53335">
    <property type="entry name" value="S-adenosyl-L-methionine-dependent methyltransferases"/>
    <property type="match status" value="1"/>
</dbReference>
<feature type="chain" id="PRO_0000412509" description="Malonyl-[acyl-carrier protein] O-methyltransferase">
    <location>
        <begin position="1"/>
        <end position="270"/>
    </location>
</feature>
<evidence type="ECO:0000255" key="1">
    <source>
        <dbReference type="HAMAP-Rule" id="MF_00835"/>
    </source>
</evidence>